<accession>Q99M15</accession>
<accession>Q6GTF6</accession>
<accession>Q9Z189</accession>
<keyword id="KW-0175">Coiled coil</keyword>
<keyword id="KW-0963">Cytoplasm</keyword>
<keyword id="KW-0903">Direct protein sequencing</keyword>
<keyword id="KW-0472">Membrane</keyword>
<keyword id="KW-0597">Phosphoprotein</keyword>
<keyword id="KW-1185">Reference proteome</keyword>
<proteinExistence type="evidence at protein level"/>
<name>PPIP2_MOUSE</name>
<sequence>MTGSLFKGNFWSTDILSTIGYDSIIQHLNNGRKNCKEFEDFLKERASIEEKYGKDLLNLSRKKPCGQSEINTLKRALEVFKQQVDNVAQCHIQLAQTLREEARKMEEFREKQKLQRKKTETIMDAAHKQRNAQFKKAMDAKKNYEQKCRDKDEAEQAVHRSANVANQRQQEKLFVKLATSKTAVEDSDKAYMLHINMLEKVREDWQSEHIKACEVFEAQECERINFFRNALWLHLNQLSQQCVANDEMYEQVRKSLETCSIEKDIQYFVNQRKTGQTPPAPIMYENFYSPQRNAAPPGKTTGPNPARRGPLPVPKRIPDDPDYSVVEDYSLLYQ</sequence>
<reference key="1">
    <citation type="journal article" date="1998" name="J. Biol. Chem.">
        <title>A novel macrophage actin-associated protein (MAYP) is tyrosine phosphorylated following colony stimulating factor-1 stimulation.</title>
        <authorList>
            <person name="Yeung Y.-G."/>
            <person name="Soldera S."/>
            <person name="Stanley E.R."/>
        </authorList>
    </citation>
    <scope>NUCLEOTIDE SEQUENCE [MRNA]</scope>
    <scope>PROTEIN SEQUENCE OF 2-10; 52-61; 76-81; 104-111; 117-128; 173-176; 182-196; 201-210; 224-228; 264-271 AND 273-287</scope>
</reference>
<reference key="2">
    <citation type="journal article" date="2005" name="Science">
        <title>The transcriptional landscape of the mammalian genome.</title>
        <authorList>
            <person name="Carninci P."/>
            <person name="Kasukawa T."/>
            <person name="Katayama S."/>
            <person name="Gough J."/>
            <person name="Frith M.C."/>
            <person name="Maeda N."/>
            <person name="Oyama R."/>
            <person name="Ravasi T."/>
            <person name="Lenhard B."/>
            <person name="Wells C."/>
            <person name="Kodzius R."/>
            <person name="Shimokawa K."/>
            <person name="Bajic V.B."/>
            <person name="Brenner S.E."/>
            <person name="Batalov S."/>
            <person name="Forrest A.R."/>
            <person name="Zavolan M."/>
            <person name="Davis M.J."/>
            <person name="Wilming L.G."/>
            <person name="Aidinis V."/>
            <person name="Allen J.E."/>
            <person name="Ambesi-Impiombato A."/>
            <person name="Apweiler R."/>
            <person name="Aturaliya R.N."/>
            <person name="Bailey T.L."/>
            <person name="Bansal M."/>
            <person name="Baxter L."/>
            <person name="Beisel K.W."/>
            <person name="Bersano T."/>
            <person name="Bono H."/>
            <person name="Chalk A.M."/>
            <person name="Chiu K.P."/>
            <person name="Choudhary V."/>
            <person name="Christoffels A."/>
            <person name="Clutterbuck D.R."/>
            <person name="Crowe M.L."/>
            <person name="Dalla E."/>
            <person name="Dalrymple B.P."/>
            <person name="de Bono B."/>
            <person name="Della Gatta G."/>
            <person name="di Bernardo D."/>
            <person name="Down T."/>
            <person name="Engstrom P."/>
            <person name="Fagiolini M."/>
            <person name="Faulkner G."/>
            <person name="Fletcher C.F."/>
            <person name="Fukushima T."/>
            <person name="Furuno M."/>
            <person name="Futaki S."/>
            <person name="Gariboldi M."/>
            <person name="Georgii-Hemming P."/>
            <person name="Gingeras T.R."/>
            <person name="Gojobori T."/>
            <person name="Green R.E."/>
            <person name="Gustincich S."/>
            <person name="Harbers M."/>
            <person name="Hayashi Y."/>
            <person name="Hensch T.K."/>
            <person name="Hirokawa N."/>
            <person name="Hill D."/>
            <person name="Huminiecki L."/>
            <person name="Iacono M."/>
            <person name="Ikeo K."/>
            <person name="Iwama A."/>
            <person name="Ishikawa T."/>
            <person name="Jakt M."/>
            <person name="Kanapin A."/>
            <person name="Katoh M."/>
            <person name="Kawasawa Y."/>
            <person name="Kelso J."/>
            <person name="Kitamura H."/>
            <person name="Kitano H."/>
            <person name="Kollias G."/>
            <person name="Krishnan S.P."/>
            <person name="Kruger A."/>
            <person name="Kummerfeld S.K."/>
            <person name="Kurochkin I.V."/>
            <person name="Lareau L.F."/>
            <person name="Lazarevic D."/>
            <person name="Lipovich L."/>
            <person name="Liu J."/>
            <person name="Liuni S."/>
            <person name="McWilliam S."/>
            <person name="Madan Babu M."/>
            <person name="Madera M."/>
            <person name="Marchionni L."/>
            <person name="Matsuda H."/>
            <person name="Matsuzawa S."/>
            <person name="Miki H."/>
            <person name="Mignone F."/>
            <person name="Miyake S."/>
            <person name="Morris K."/>
            <person name="Mottagui-Tabar S."/>
            <person name="Mulder N."/>
            <person name="Nakano N."/>
            <person name="Nakauchi H."/>
            <person name="Ng P."/>
            <person name="Nilsson R."/>
            <person name="Nishiguchi S."/>
            <person name="Nishikawa S."/>
            <person name="Nori F."/>
            <person name="Ohara O."/>
            <person name="Okazaki Y."/>
            <person name="Orlando V."/>
            <person name="Pang K.C."/>
            <person name="Pavan W.J."/>
            <person name="Pavesi G."/>
            <person name="Pesole G."/>
            <person name="Petrovsky N."/>
            <person name="Piazza S."/>
            <person name="Reed J."/>
            <person name="Reid J.F."/>
            <person name="Ring B.Z."/>
            <person name="Ringwald M."/>
            <person name="Rost B."/>
            <person name="Ruan Y."/>
            <person name="Salzberg S.L."/>
            <person name="Sandelin A."/>
            <person name="Schneider C."/>
            <person name="Schoenbach C."/>
            <person name="Sekiguchi K."/>
            <person name="Semple C.A."/>
            <person name="Seno S."/>
            <person name="Sessa L."/>
            <person name="Sheng Y."/>
            <person name="Shibata Y."/>
            <person name="Shimada H."/>
            <person name="Shimada K."/>
            <person name="Silva D."/>
            <person name="Sinclair B."/>
            <person name="Sperling S."/>
            <person name="Stupka E."/>
            <person name="Sugiura K."/>
            <person name="Sultana R."/>
            <person name="Takenaka Y."/>
            <person name="Taki K."/>
            <person name="Tammoja K."/>
            <person name="Tan S.L."/>
            <person name="Tang S."/>
            <person name="Taylor M.S."/>
            <person name="Tegner J."/>
            <person name="Teichmann S.A."/>
            <person name="Ueda H.R."/>
            <person name="van Nimwegen E."/>
            <person name="Verardo R."/>
            <person name="Wei C.L."/>
            <person name="Yagi K."/>
            <person name="Yamanishi H."/>
            <person name="Zabarovsky E."/>
            <person name="Zhu S."/>
            <person name="Zimmer A."/>
            <person name="Hide W."/>
            <person name="Bult C."/>
            <person name="Grimmond S.M."/>
            <person name="Teasdale R.D."/>
            <person name="Liu E.T."/>
            <person name="Brusic V."/>
            <person name="Quackenbush J."/>
            <person name="Wahlestedt C."/>
            <person name="Mattick J.S."/>
            <person name="Hume D.A."/>
            <person name="Kai C."/>
            <person name="Sasaki D."/>
            <person name="Tomaru Y."/>
            <person name="Fukuda S."/>
            <person name="Kanamori-Katayama M."/>
            <person name="Suzuki M."/>
            <person name="Aoki J."/>
            <person name="Arakawa T."/>
            <person name="Iida J."/>
            <person name="Imamura K."/>
            <person name="Itoh M."/>
            <person name="Kato T."/>
            <person name="Kawaji H."/>
            <person name="Kawagashira N."/>
            <person name="Kawashima T."/>
            <person name="Kojima M."/>
            <person name="Kondo S."/>
            <person name="Konno H."/>
            <person name="Nakano K."/>
            <person name="Ninomiya N."/>
            <person name="Nishio T."/>
            <person name="Okada M."/>
            <person name="Plessy C."/>
            <person name="Shibata K."/>
            <person name="Shiraki T."/>
            <person name="Suzuki S."/>
            <person name="Tagami M."/>
            <person name="Waki K."/>
            <person name="Watahiki A."/>
            <person name="Okamura-Oho Y."/>
            <person name="Suzuki H."/>
            <person name="Kawai J."/>
            <person name="Hayashizaki Y."/>
        </authorList>
    </citation>
    <scope>NUCLEOTIDE SEQUENCE [LARGE SCALE MRNA]</scope>
    <source>
        <strain>C57BL/6J</strain>
        <strain>NOD</strain>
        <tissue>Inner ear</tissue>
        <tissue>Skin</tissue>
    </source>
</reference>
<reference key="3">
    <citation type="journal article" date="2004" name="Genome Res.">
        <title>The status, quality, and expansion of the NIH full-length cDNA project: the Mammalian Gene Collection (MGC).</title>
        <authorList>
            <consortium name="The MGC Project Team"/>
        </authorList>
    </citation>
    <scope>NUCLEOTIDE SEQUENCE [LARGE SCALE MRNA]</scope>
    <source>
        <strain>FVB/N</strain>
        <tissue>Mammary gland</tissue>
    </source>
</reference>
<reference key="4">
    <citation type="journal article" date="2007" name="J. Immunol.">
        <title>Quantitative time-resolved phosphoproteomic analysis of mast cell signaling.</title>
        <authorList>
            <person name="Cao L."/>
            <person name="Yu K."/>
            <person name="Banh C."/>
            <person name="Nguyen V."/>
            <person name="Ritz A."/>
            <person name="Raphael B.J."/>
            <person name="Kawakami Y."/>
            <person name="Kawakami T."/>
            <person name="Salomon A.R."/>
        </authorList>
    </citation>
    <scope>PHOSPHORYLATION [LARGE SCALE ANALYSIS] AT TYR-323 AND TYR-329</scope>
    <scope>IDENTIFICATION BY MASS SPECTROMETRY [LARGE SCALE ANALYSIS]</scope>
    <source>
        <tissue>Mast cell</tissue>
    </source>
</reference>
<reference key="5">
    <citation type="journal article" date="2009" name="Immunity">
        <title>The phagosomal proteome in interferon-gamma-activated macrophages.</title>
        <authorList>
            <person name="Trost M."/>
            <person name="English L."/>
            <person name="Lemieux S."/>
            <person name="Courcelles M."/>
            <person name="Desjardins M."/>
            <person name="Thibault P."/>
        </authorList>
    </citation>
    <scope>IDENTIFICATION BY MASS SPECTROMETRY [LARGE SCALE ANALYSIS]</scope>
</reference>
<comment type="function">
    <text>Binds to F-actin. May be involved in regulation of the actin cytoskeleton.</text>
</comment>
<comment type="interaction">
    <interactant intactId="EBI-8653964">
        <id>Q99M15</id>
    </interactant>
    <interactant intactId="EBI-7074223">
        <id>Q61152</id>
        <label>Ptpn18</label>
    </interactant>
    <organismsDiffer>false</organismsDiffer>
    <experiments>7</experiments>
</comment>
<comment type="subcellular location">
    <subcellularLocation>
        <location>Cytoplasm</location>
    </subcellularLocation>
    <subcellularLocation>
        <location>Membrane</location>
        <topology>Peripheral membrane protein</topology>
    </subcellularLocation>
</comment>
<comment type="tissue specificity">
    <text>Expressed in macrophage-containing tissues, including bone marrow, spleen, liver, kidney, intestine and brain.</text>
</comment>
<comment type="PTM">
    <text>Phosphorylated on tyrosine.</text>
</comment>
<protein>
    <recommendedName>
        <fullName>Proline-serine-threonine phosphatase-interacting protein 2</fullName>
        <shortName>PEST phosphatase-interacting protein 2</shortName>
    </recommendedName>
    <alternativeName>
        <fullName>Macrophage actin-associated tyrosine-phosphorylated protein</fullName>
    </alternativeName>
    <alternativeName>
        <fullName>pp37</fullName>
    </alternativeName>
</protein>
<dbReference type="EMBL" id="Y18101">
    <property type="protein sequence ID" value="CAA77027.1"/>
    <property type="molecule type" value="mRNA"/>
</dbReference>
<dbReference type="EMBL" id="AK132418">
    <property type="protein sequence ID" value="BAE21158.1"/>
    <property type="molecule type" value="mRNA"/>
</dbReference>
<dbReference type="EMBL" id="AK154724">
    <property type="protein sequence ID" value="BAE32788.1"/>
    <property type="molecule type" value="mRNA"/>
</dbReference>
<dbReference type="EMBL" id="AK157994">
    <property type="protein sequence ID" value="BAE34306.1"/>
    <property type="molecule type" value="mRNA"/>
</dbReference>
<dbReference type="EMBL" id="BC002123">
    <property type="protein sequence ID" value="AAH02123.1"/>
    <property type="molecule type" value="mRNA"/>
</dbReference>
<dbReference type="EMBL" id="BC057654">
    <property type="protein sequence ID" value="AAH57654.1"/>
    <property type="molecule type" value="mRNA"/>
</dbReference>
<dbReference type="CCDS" id="CCDS37868.1"/>
<dbReference type="RefSeq" id="NP_038859.3">
    <property type="nucleotide sequence ID" value="NM_013831.4"/>
</dbReference>
<dbReference type="RefSeq" id="XP_036016925.1">
    <property type="nucleotide sequence ID" value="XM_036161032.1"/>
</dbReference>
<dbReference type="SMR" id="Q99M15"/>
<dbReference type="FunCoup" id="Q99M15">
    <property type="interactions" value="140"/>
</dbReference>
<dbReference type="IntAct" id="Q99M15">
    <property type="interactions" value="3"/>
</dbReference>
<dbReference type="MINT" id="Q99M15"/>
<dbReference type="STRING" id="10090.ENSMUSP00000110389"/>
<dbReference type="iPTMnet" id="Q99M15"/>
<dbReference type="PhosphoSitePlus" id="Q99M15"/>
<dbReference type="PaxDb" id="10090-ENSMUSP00000110389"/>
<dbReference type="ProteomicsDB" id="291834"/>
<dbReference type="Antibodypedia" id="22437">
    <property type="antibodies" value="87 antibodies from 21 providers"/>
</dbReference>
<dbReference type="DNASU" id="19201"/>
<dbReference type="Ensembl" id="ENSMUST00000114741.4">
    <property type="protein sequence ID" value="ENSMUSP00000110389.3"/>
    <property type="gene ID" value="ENSMUSG00000025429.10"/>
</dbReference>
<dbReference type="GeneID" id="19201"/>
<dbReference type="KEGG" id="mmu:19201"/>
<dbReference type="UCSC" id="uc008fry.1">
    <property type="organism name" value="mouse"/>
</dbReference>
<dbReference type="AGR" id="MGI:1335088"/>
<dbReference type="CTD" id="9050"/>
<dbReference type="MGI" id="MGI:1335088">
    <property type="gene designation" value="Pstpip2"/>
</dbReference>
<dbReference type="VEuPathDB" id="HostDB:ENSMUSG00000025429"/>
<dbReference type="eggNOG" id="KOG2398">
    <property type="taxonomic scope" value="Eukaryota"/>
</dbReference>
<dbReference type="GeneTree" id="ENSGT00940000158788"/>
<dbReference type="HOGENOM" id="CLU_038196_1_0_1"/>
<dbReference type="InParanoid" id="Q99M15"/>
<dbReference type="OMA" id="EEADQNM"/>
<dbReference type="OrthoDB" id="10255964at2759"/>
<dbReference type="PhylomeDB" id="Q99M15"/>
<dbReference type="TreeFam" id="TF313677"/>
<dbReference type="BioGRID-ORCS" id="19201">
    <property type="hits" value="4 hits in 79 CRISPR screens"/>
</dbReference>
<dbReference type="ChiTaRS" id="Pstpip2">
    <property type="organism name" value="mouse"/>
</dbReference>
<dbReference type="PRO" id="PR:Q99M15"/>
<dbReference type="Proteomes" id="UP000000589">
    <property type="component" value="Chromosome 18"/>
</dbReference>
<dbReference type="RNAct" id="Q99M15">
    <property type="molecule type" value="protein"/>
</dbReference>
<dbReference type="Bgee" id="ENSMUSG00000025429">
    <property type="expression patterns" value="Expressed in granulocyte and 61 other cell types or tissues"/>
</dbReference>
<dbReference type="ExpressionAtlas" id="Q99M15">
    <property type="expression patterns" value="baseline and differential"/>
</dbReference>
<dbReference type="GO" id="GO:0005856">
    <property type="term" value="C:cytoskeleton"/>
    <property type="evidence" value="ECO:0000314"/>
    <property type="project" value="MGI"/>
</dbReference>
<dbReference type="GO" id="GO:0005829">
    <property type="term" value="C:cytosol"/>
    <property type="evidence" value="ECO:0000314"/>
    <property type="project" value="UniProtKB"/>
</dbReference>
<dbReference type="GO" id="GO:0016020">
    <property type="term" value="C:membrane"/>
    <property type="evidence" value="ECO:0000314"/>
    <property type="project" value="UniProtKB"/>
</dbReference>
<dbReference type="GO" id="GO:0003779">
    <property type="term" value="F:actin binding"/>
    <property type="evidence" value="ECO:0000303"/>
    <property type="project" value="UniProtKB"/>
</dbReference>
<dbReference type="GO" id="GO:0007010">
    <property type="term" value="P:cytoskeleton organization"/>
    <property type="evidence" value="ECO:0000303"/>
    <property type="project" value="UniProtKB"/>
</dbReference>
<dbReference type="CDD" id="cd07672">
    <property type="entry name" value="F-BAR_PSTPIP2"/>
    <property type="match status" value="1"/>
</dbReference>
<dbReference type="FunFam" id="1.20.1270.60:FF:000054">
    <property type="entry name" value="Proline-serine-threonine phosphatase interacting protein 2"/>
    <property type="match status" value="1"/>
</dbReference>
<dbReference type="Gene3D" id="1.20.1270.60">
    <property type="entry name" value="Arfaptin homology (AH) domain/BAR domain"/>
    <property type="match status" value="1"/>
</dbReference>
<dbReference type="InterPro" id="IPR027267">
    <property type="entry name" value="AH/BAR_dom_sf"/>
</dbReference>
<dbReference type="InterPro" id="IPR031160">
    <property type="entry name" value="F_BAR"/>
</dbReference>
<dbReference type="InterPro" id="IPR001060">
    <property type="entry name" value="FCH_dom"/>
</dbReference>
<dbReference type="InterPro" id="IPR042694">
    <property type="entry name" value="PSTPIP2_F-BAR"/>
</dbReference>
<dbReference type="PANTHER" id="PTHR23065">
    <property type="entry name" value="PROLINE-SERINE-THREONINE PHOSPHATASE INTERACTING PROTEIN 1"/>
    <property type="match status" value="1"/>
</dbReference>
<dbReference type="PANTHER" id="PTHR23065:SF9">
    <property type="entry name" value="PROLINE-SERINE-THREONINE PHOSPHATASE-INTERACTING PROTEIN 2"/>
    <property type="match status" value="1"/>
</dbReference>
<dbReference type="Pfam" id="PF00611">
    <property type="entry name" value="FCH"/>
    <property type="match status" value="1"/>
</dbReference>
<dbReference type="SMART" id="SM00055">
    <property type="entry name" value="FCH"/>
    <property type="match status" value="1"/>
</dbReference>
<dbReference type="SUPFAM" id="SSF103657">
    <property type="entry name" value="BAR/IMD domain-like"/>
    <property type="match status" value="1"/>
</dbReference>
<dbReference type="PROSITE" id="PS51741">
    <property type="entry name" value="F_BAR"/>
    <property type="match status" value="1"/>
</dbReference>
<evidence type="ECO:0000255" key="1"/>
<evidence type="ECO:0000255" key="2">
    <source>
        <dbReference type="PROSITE-ProRule" id="PRU01077"/>
    </source>
</evidence>
<evidence type="ECO:0000256" key="3">
    <source>
        <dbReference type="SAM" id="MobiDB-lite"/>
    </source>
</evidence>
<evidence type="ECO:0000269" key="4">
    <source>
    </source>
</evidence>
<evidence type="ECO:0000305" key="5"/>
<evidence type="ECO:0007744" key="6">
    <source>
    </source>
</evidence>
<gene>
    <name type="primary">Pstpip2</name>
    <name type="synonym">Mayp</name>
</gene>
<feature type="initiator methionine" description="Removed" evidence="4">
    <location>
        <position position="1"/>
    </location>
</feature>
<feature type="chain" id="PRO_0000058542" description="Proline-serine-threonine phosphatase-interacting protein 2">
    <location>
        <begin position="2"/>
        <end position="334"/>
    </location>
</feature>
<feature type="domain" description="F-BAR" evidence="2">
    <location>
        <begin position="4"/>
        <end position="264"/>
    </location>
</feature>
<feature type="region of interest" description="Disordered" evidence="3">
    <location>
        <begin position="288"/>
        <end position="322"/>
    </location>
</feature>
<feature type="coiled-coil region" evidence="1">
    <location>
        <begin position="66"/>
        <end position="163"/>
    </location>
</feature>
<feature type="modified residue" description="Phosphotyrosine" evidence="6">
    <location>
        <position position="323"/>
    </location>
</feature>
<feature type="modified residue" description="Phosphotyrosine" evidence="6">
    <location>
        <position position="329"/>
    </location>
</feature>
<feature type="sequence conflict" description="In Ref. 3; AAH02123." evidence="5" ref="3">
    <original>G</original>
    <variation>E</variation>
    <location>
        <position position="298"/>
    </location>
</feature>
<organism>
    <name type="scientific">Mus musculus</name>
    <name type="common">Mouse</name>
    <dbReference type="NCBI Taxonomy" id="10090"/>
    <lineage>
        <taxon>Eukaryota</taxon>
        <taxon>Metazoa</taxon>
        <taxon>Chordata</taxon>
        <taxon>Craniata</taxon>
        <taxon>Vertebrata</taxon>
        <taxon>Euteleostomi</taxon>
        <taxon>Mammalia</taxon>
        <taxon>Eutheria</taxon>
        <taxon>Euarchontoglires</taxon>
        <taxon>Glires</taxon>
        <taxon>Rodentia</taxon>
        <taxon>Myomorpha</taxon>
        <taxon>Muroidea</taxon>
        <taxon>Muridae</taxon>
        <taxon>Murinae</taxon>
        <taxon>Mus</taxon>
        <taxon>Mus</taxon>
    </lineage>
</organism>